<accession>P0A158</accession>
<accession>P31855</accession>
<organism>
    <name type="scientific">Pseudomonas putida</name>
    <name type="common">Arthrobacter siderocapsulatus</name>
    <dbReference type="NCBI Taxonomy" id="303"/>
    <lineage>
        <taxon>Bacteria</taxon>
        <taxon>Pseudomonadati</taxon>
        <taxon>Pseudomonadota</taxon>
        <taxon>Gammaproteobacteria</taxon>
        <taxon>Pseudomonadales</taxon>
        <taxon>Pseudomonadaceae</taxon>
        <taxon>Pseudomonas</taxon>
    </lineage>
</organism>
<comment type="function">
    <text evidence="2">Forms part of the ribosomal stalk which helps the ribosome interact with GTP-bound translation factors. Is thus essential for accurate translation.</text>
</comment>
<comment type="subunit">
    <text evidence="2">Homodimer. Part of the ribosomal stalk of the 50S ribosomal subunit. Forms a multimeric L10(L12)X complex, where L10 forms an elongated spine to which 2 to 4 L12 dimers bind in a sequential fashion. Binds GTP-bound translation factors.</text>
</comment>
<comment type="similarity">
    <text evidence="2">Belongs to the bacterial ribosomal protein bL12 family.</text>
</comment>
<evidence type="ECO:0000250" key="1"/>
<evidence type="ECO:0000255" key="2">
    <source>
        <dbReference type="HAMAP-Rule" id="MF_00368"/>
    </source>
</evidence>
<evidence type="ECO:0000305" key="3"/>
<proteinExistence type="inferred from homology"/>
<keyword id="KW-0687">Ribonucleoprotein</keyword>
<keyword id="KW-0689">Ribosomal protein</keyword>
<reference key="1">
    <citation type="journal article" date="1989" name="Bioorg. Khim.">
        <title>Nucleotide sequence of the rplL gene coding for ribosomal protein L7/L12 of Pseudomonas putida.</title>
        <authorList>
            <person name="Borodin A.M."/>
            <person name="Danilkovich A.V."/>
            <person name="Allikmets R.L."/>
        </authorList>
    </citation>
    <scope>NUCLEOTIDE SEQUENCE [GENOMIC DNA]</scope>
</reference>
<name>RL7_PSEPU</name>
<sequence length="121" mass="12600">MSLTNEQIIEAIGQKTVLEVVELIKAMEETFGVTAAVAAAGPAAAAAVVEEQTEFNVVLVEAGDKKVNVIKAVRELTGLGLKEAKEKVDGAPQVVAEGVSKEAAEDAKKKLEEAGAKVELK</sequence>
<dbReference type="PIR" id="JN0432">
    <property type="entry name" value="JN0432"/>
</dbReference>
<dbReference type="RefSeq" id="WP_003255496.1">
    <property type="nucleotide sequence ID" value="NZ_VCPS01000011.1"/>
</dbReference>
<dbReference type="SMR" id="P0A158"/>
<dbReference type="GeneID" id="93675514"/>
<dbReference type="OMA" id="LEDKWGV"/>
<dbReference type="OrthoDB" id="9811748at2"/>
<dbReference type="GO" id="GO:0022625">
    <property type="term" value="C:cytosolic large ribosomal subunit"/>
    <property type="evidence" value="ECO:0007669"/>
    <property type="project" value="TreeGrafter"/>
</dbReference>
<dbReference type="GO" id="GO:0003729">
    <property type="term" value="F:mRNA binding"/>
    <property type="evidence" value="ECO:0007669"/>
    <property type="project" value="TreeGrafter"/>
</dbReference>
<dbReference type="GO" id="GO:0003735">
    <property type="term" value="F:structural constituent of ribosome"/>
    <property type="evidence" value="ECO:0007669"/>
    <property type="project" value="InterPro"/>
</dbReference>
<dbReference type="GO" id="GO:0006412">
    <property type="term" value="P:translation"/>
    <property type="evidence" value="ECO:0007669"/>
    <property type="project" value="UniProtKB-UniRule"/>
</dbReference>
<dbReference type="CDD" id="cd00387">
    <property type="entry name" value="Ribosomal_L7_L12"/>
    <property type="match status" value="1"/>
</dbReference>
<dbReference type="FunFam" id="3.30.1390.10:FF:000001">
    <property type="entry name" value="50S ribosomal protein L7/L12"/>
    <property type="match status" value="1"/>
</dbReference>
<dbReference type="Gene3D" id="3.30.1390.10">
    <property type="match status" value="1"/>
</dbReference>
<dbReference type="Gene3D" id="1.20.5.710">
    <property type="entry name" value="Single helix bin"/>
    <property type="match status" value="1"/>
</dbReference>
<dbReference type="HAMAP" id="MF_00368">
    <property type="entry name" value="Ribosomal_bL12"/>
    <property type="match status" value="1"/>
</dbReference>
<dbReference type="InterPro" id="IPR000206">
    <property type="entry name" value="Ribosomal_bL12"/>
</dbReference>
<dbReference type="InterPro" id="IPR013823">
    <property type="entry name" value="Ribosomal_bL12_C"/>
</dbReference>
<dbReference type="InterPro" id="IPR014719">
    <property type="entry name" value="Ribosomal_bL12_C/ClpS-like"/>
</dbReference>
<dbReference type="InterPro" id="IPR008932">
    <property type="entry name" value="Ribosomal_bL12_oligo"/>
</dbReference>
<dbReference type="InterPro" id="IPR036235">
    <property type="entry name" value="Ribosomal_bL12_oligo_N_sf"/>
</dbReference>
<dbReference type="NCBIfam" id="TIGR00855">
    <property type="entry name" value="L12"/>
    <property type="match status" value="1"/>
</dbReference>
<dbReference type="PANTHER" id="PTHR45987">
    <property type="entry name" value="39S RIBOSOMAL PROTEIN L12"/>
    <property type="match status" value="1"/>
</dbReference>
<dbReference type="PANTHER" id="PTHR45987:SF4">
    <property type="entry name" value="LARGE RIBOSOMAL SUBUNIT PROTEIN BL12M"/>
    <property type="match status" value="1"/>
</dbReference>
<dbReference type="Pfam" id="PF00542">
    <property type="entry name" value="Ribosomal_L12"/>
    <property type="match status" value="1"/>
</dbReference>
<dbReference type="Pfam" id="PF16320">
    <property type="entry name" value="Ribosomal_L12_N"/>
    <property type="match status" value="1"/>
</dbReference>
<dbReference type="SUPFAM" id="SSF54736">
    <property type="entry name" value="ClpS-like"/>
    <property type="match status" value="1"/>
</dbReference>
<dbReference type="SUPFAM" id="SSF48300">
    <property type="entry name" value="Ribosomal protein L7/12, oligomerisation (N-terminal) domain"/>
    <property type="match status" value="1"/>
</dbReference>
<feature type="initiator methionine" description="Removed" evidence="1">
    <location>
        <position position="1"/>
    </location>
</feature>
<feature type="chain" id="PRO_0000157563" description="Large ribosomal subunit protein bL12">
    <location>
        <begin position="2"/>
        <end position="121"/>
    </location>
</feature>
<gene>
    <name evidence="2" type="primary">rplL</name>
</gene>
<protein>
    <recommendedName>
        <fullName evidence="2">Large ribosomal subunit protein bL12</fullName>
    </recommendedName>
    <alternativeName>
        <fullName evidence="3">50S ribosomal protein L7/L12</fullName>
    </alternativeName>
</protein>